<accession>A1KAC8</accession>
<organism>
    <name type="scientific">Azoarcus sp. (strain BH72)</name>
    <dbReference type="NCBI Taxonomy" id="418699"/>
    <lineage>
        <taxon>Bacteria</taxon>
        <taxon>Pseudomonadati</taxon>
        <taxon>Pseudomonadota</taxon>
        <taxon>Betaproteobacteria</taxon>
        <taxon>Rhodocyclales</taxon>
        <taxon>Zoogloeaceae</taxon>
        <taxon>Azoarcus</taxon>
    </lineage>
</organism>
<dbReference type="EMBL" id="AM406670">
    <property type="protein sequence ID" value="CAL95784.1"/>
    <property type="molecule type" value="Genomic_DNA"/>
</dbReference>
<dbReference type="RefSeq" id="WP_011766892.1">
    <property type="nucleotide sequence ID" value="NZ_CP016210.1"/>
</dbReference>
<dbReference type="SMR" id="A1KAC8"/>
<dbReference type="STRING" id="62928.azo3167"/>
<dbReference type="KEGG" id="aoa:dqs_3299"/>
<dbReference type="KEGG" id="azo:azo3167"/>
<dbReference type="eggNOG" id="COG0261">
    <property type="taxonomic scope" value="Bacteria"/>
</dbReference>
<dbReference type="HOGENOM" id="CLU_061463_3_2_4"/>
<dbReference type="OrthoDB" id="9813334at2"/>
<dbReference type="Proteomes" id="UP000002588">
    <property type="component" value="Chromosome"/>
</dbReference>
<dbReference type="GO" id="GO:0005737">
    <property type="term" value="C:cytoplasm"/>
    <property type="evidence" value="ECO:0007669"/>
    <property type="project" value="UniProtKB-ARBA"/>
</dbReference>
<dbReference type="GO" id="GO:1990904">
    <property type="term" value="C:ribonucleoprotein complex"/>
    <property type="evidence" value="ECO:0007669"/>
    <property type="project" value="UniProtKB-KW"/>
</dbReference>
<dbReference type="GO" id="GO:0005840">
    <property type="term" value="C:ribosome"/>
    <property type="evidence" value="ECO:0007669"/>
    <property type="project" value="UniProtKB-KW"/>
</dbReference>
<dbReference type="GO" id="GO:0019843">
    <property type="term" value="F:rRNA binding"/>
    <property type="evidence" value="ECO:0007669"/>
    <property type="project" value="UniProtKB-UniRule"/>
</dbReference>
<dbReference type="GO" id="GO:0003735">
    <property type="term" value="F:structural constituent of ribosome"/>
    <property type="evidence" value="ECO:0007669"/>
    <property type="project" value="InterPro"/>
</dbReference>
<dbReference type="GO" id="GO:0006412">
    <property type="term" value="P:translation"/>
    <property type="evidence" value="ECO:0007669"/>
    <property type="project" value="UniProtKB-UniRule"/>
</dbReference>
<dbReference type="HAMAP" id="MF_01363">
    <property type="entry name" value="Ribosomal_bL21"/>
    <property type="match status" value="1"/>
</dbReference>
<dbReference type="InterPro" id="IPR028909">
    <property type="entry name" value="bL21-like"/>
</dbReference>
<dbReference type="InterPro" id="IPR036164">
    <property type="entry name" value="bL21-like_sf"/>
</dbReference>
<dbReference type="InterPro" id="IPR001787">
    <property type="entry name" value="Ribosomal_bL21"/>
</dbReference>
<dbReference type="InterPro" id="IPR018258">
    <property type="entry name" value="Ribosomal_bL21_CS"/>
</dbReference>
<dbReference type="NCBIfam" id="TIGR00061">
    <property type="entry name" value="L21"/>
    <property type="match status" value="1"/>
</dbReference>
<dbReference type="PANTHER" id="PTHR21349">
    <property type="entry name" value="50S RIBOSOMAL PROTEIN L21"/>
    <property type="match status" value="1"/>
</dbReference>
<dbReference type="PANTHER" id="PTHR21349:SF0">
    <property type="entry name" value="LARGE RIBOSOMAL SUBUNIT PROTEIN BL21M"/>
    <property type="match status" value="1"/>
</dbReference>
<dbReference type="Pfam" id="PF00829">
    <property type="entry name" value="Ribosomal_L21p"/>
    <property type="match status" value="1"/>
</dbReference>
<dbReference type="SUPFAM" id="SSF141091">
    <property type="entry name" value="L21p-like"/>
    <property type="match status" value="1"/>
</dbReference>
<dbReference type="PROSITE" id="PS01169">
    <property type="entry name" value="RIBOSOMAL_L21"/>
    <property type="match status" value="1"/>
</dbReference>
<feature type="chain" id="PRO_1000067801" description="Large ribosomal subunit protein bL21">
    <location>
        <begin position="1"/>
        <end position="103"/>
    </location>
</feature>
<gene>
    <name evidence="1" type="primary">rplU</name>
    <name type="ordered locus">azo3167</name>
</gene>
<comment type="function">
    <text evidence="1">This protein binds to 23S rRNA in the presence of protein L20.</text>
</comment>
<comment type="subunit">
    <text evidence="1">Part of the 50S ribosomal subunit. Contacts protein L20.</text>
</comment>
<comment type="similarity">
    <text evidence="1">Belongs to the bacterial ribosomal protein bL21 family.</text>
</comment>
<evidence type="ECO:0000255" key="1">
    <source>
        <dbReference type="HAMAP-Rule" id="MF_01363"/>
    </source>
</evidence>
<evidence type="ECO:0000305" key="2"/>
<keyword id="KW-1185">Reference proteome</keyword>
<keyword id="KW-0687">Ribonucleoprotein</keyword>
<keyword id="KW-0689">Ribosomal protein</keyword>
<keyword id="KW-0694">RNA-binding</keyword>
<keyword id="KW-0699">rRNA-binding</keyword>
<protein>
    <recommendedName>
        <fullName evidence="1">Large ribosomal subunit protein bL21</fullName>
    </recommendedName>
    <alternativeName>
        <fullName evidence="2">50S ribosomal protein L21</fullName>
    </alternativeName>
</protein>
<reference key="1">
    <citation type="journal article" date="2006" name="Nat. Biotechnol.">
        <title>Complete genome of the mutualistic, N2-fixing grass endophyte Azoarcus sp. strain BH72.</title>
        <authorList>
            <person name="Krause A."/>
            <person name="Ramakumar A."/>
            <person name="Bartels D."/>
            <person name="Battistoni F."/>
            <person name="Bekel T."/>
            <person name="Boch J."/>
            <person name="Boehm M."/>
            <person name="Friedrich F."/>
            <person name="Hurek T."/>
            <person name="Krause L."/>
            <person name="Linke B."/>
            <person name="McHardy A.C."/>
            <person name="Sarkar A."/>
            <person name="Schneiker S."/>
            <person name="Syed A.A."/>
            <person name="Thauer R."/>
            <person name="Vorhoelter F.-J."/>
            <person name="Weidner S."/>
            <person name="Puehler A."/>
            <person name="Reinhold-Hurek B."/>
            <person name="Kaiser O."/>
            <person name="Goesmann A."/>
        </authorList>
    </citation>
    <scope>NUCLEOTIDE SEQUENCE [LARGE SCALE GENOMIC DNA]</scope>
    <source>
        <strain>BH72</strain>
    </source>
</reference>
<sequence length="103" mass="11411">MYAVIKTGGKQYRVAAGEKIKVEQIPADVGSEITIDQVLMVGEGESVKIGTPVVSGAAVKATVVSHGRHDKVKIFKMRRRKHYQKHQGHRQNYTELRIEAISA</sequence>
<name>RL21_AZOSB</name>
<proteinExistence type="inferred from homology"/>